<sequence length="136" mass="15238">MKLHIFKSKIHRATVTNADLYYEGSITIDMDLVDLAGMMPNEKVQVVNNNNGARFETYIIRGKRGSGTIQLNGAAARLASIGDEIIIITYAEMEPEEAKDYKPTVVLVDKKNRPKKIFQLGEETTPEEAPSLEQRN</sequence>
<feature type="chain" id="PRO_1000191952" description="Aspartate 1-decarboxylase beta chain" evidence="1">
    <location>
        <begin position="1"/>
        <end position="24"/>
    </location>
</feature>
<feature type="chain" id="PRO_1000191953" description="Aspartate 1-decarboxylase alpha chain" evidence="1">
    <location>
        <begin position="25"/>
        <end position="136"/>
    </location>
</feature>
<feature type="region of interest" description="Disordered" evidence="2">
    <location>
        <begin position="117"/>
        <end position="136"/>
    </location>
</feature>
<feature type="active site" description="Schiff-base intermediate with substrate; via pyruvic acid" evidence="1">
    <location>
        <position position="25"/>
    </location>
</feature>
<feature type="active site" description="Proton donor" evidence="1">
    <location>
        <position position="58"/>
    </location>
</feature>
<feature type="binding site" evidence="1">
    <location>
        <position position="57"/>
    </location>
    <ligand>
        <name>substrate</name>
    </ligand>
</feature>
<feature type="binding site" evidence="1">
    <location>
        <begin position="73"/>
        <end position="75"/>
    </location>
    <ligand>
        <name>substrate</name>
    </ligand>
</feature>
<feature type="modified residue" description="Pyruvic acid (Ser)" evidence="1">
    <location>
        <position position="25"/>
    </location>
</feature>
<protein>
    <recommendedName>
        <fullName evidence="1">Aspartate 1-decarboxylase</fullName>
        <ecNumber evidence="1">4.1.1.11</ecNumber>
    </recommendedName>
    <alternativeName>
        <fullName evidence="1">Aspartate alpha-decarboxylase</fullName>
    </alternativeName>
    <component>
        <recommendedName>
            <fullName evidence="1">Aspartate 1-decarboxylase beta chain</fullName>
        </recommendedName>
    </component>
    <component>
        <recommendedName>
            <fullName evidence="1">Aspartate 1-decarboxylase alpha chain</fullName>
        </recommendedName>
    </component>
</protein>
<keyword id="KW-0068">Autocatalytic cleavage</keyword>
<keyword id="KW-0963">Cytoplasm</keyword>
<keyword id="KW-0210">Decarboxylase</keyword>
<keyword id="KW-0456">Lyase</keyword>
<keyword id="KW-0566">Pantothenate biosynthesis</keyword>
<keyword id="KW-0670">Pyruvate</keyword>
<keyword id="KW-1185">Reference proteome</keyword>
<keyword id="KW-0704">Schiff base</keyword>
<keyword id="KW-0865">Zymogen</keyword>
<organism>
    <name type="scientific">Chloroherpeton thalassium (strain ATCC 35110 / GB-78)</name>
    <dbReference type="NCBI Taxonomy" id="517418"/>
    <lineage>
        <taxon>Bacteria</taxon>
        <taxon>Pseudomonadati</taxon>
        <taxon>Chlorobiota</taxon>
        <taxon>Chlorobiia</taxon>
        <taxon>Chlorobiales</taxon>
        <taxon>Chloroherpetonaceae</taxon>
        <taxon>Chloroherpeton</taxon>
    </lineage>
</organism>
<evidence type="ECO:0000255" key="1">
    <source>
        <dbReference type="HAMAP-Rule" id="MF_00446"/>
    </source>
</evidence>
<evidence type="ECO:0000256" key="2">
    <source>
        <dbReference type="SAM" id="MobiDB-lite"/>
    </source>
</evidence>
<reference key="1">
    <citation type="submission" date="2008-06" db="EMBL/GenBank/DDBJ databases">
        <title>Complete sequence of Chloroherpeton thalassium ATCC 35110.</title>
        <authorList>
            <consortium name="US DOE Joint Genome Institute"/>
            <person name="Lucas S."/>
            <person name="Copeland A."/>
            <person name="Lapidus A."/>
            <person name="Glavina del Rio T."/>
            <person name="Dalin E."/>
            <person name="Tice H."/>
            <person name="Bruce D."/>
            <person name="Goodwin L."/>
            <person name="Pitluck S."/>
            <person name="Schmutz J."/>
            <person name="Larimer F."/>
            <person name="Land M."/>
            <person name="Hauser L."/>
            <person name="Kyrpides N."/>
            <person name="Mikhailova N."/>
            <person name="Liu Z."/>
            <person name="Li T."/>
            <person name="Zhao F."/>
            <person name="Overmann J."/>
            <person name="Bryant D.A."/>
            <person name="Richardson P."/>
        </authorList>
    </citation>
    <scope>NUCLEOTIDE SEQUENCE [LARGE SCALE GENOMIC DNA]</scope>
    <source>
        <strain>ATCC 35110 / GB-78</strain>
    </source>
</reference>
<proteinExistence type="inferred from homology"/>
<gene>
    <name evidence="1" type="primary">panD</name>
    <name type="ordered locus">Ctha_1794</name>
</gene>
<comment type="function">
    <text evidence="1">Catalyzes the pyruvoyl-dependent decarboxylation of aspartate to produce beta-alanine.</text>
</comment>
<comment type="catalytic activity">
    <reaction evidence="1">
        <text>L-aspartate + H(+) = beta-alanine + CO2</text>
        <dbReference type="Rhea" id="RHEA:19497"/>
        <dbReference type="ChEBI" id="CHEBI:15378"/>
        <dbReference type="ChEBI" id="CHEBI:16526"/>
        <dbReference type="ChEBI" id="CHEBI:29991"/>
        <dbReference type="ChEBI" id="CHEBI:57966"/>
        <dbReference type="EC" id="4.1.1.11"/>
    </reaction>
</comment>
<comment type="cofactor">
    <cofactor evidence="1">
        <name>pyruvate</name>
        <dbReference type="ChEBI" id="CHEBI:15361"/>
    </cofactor>
    <text evidence="1">Binds 1 pyruvoyl group covalently per subunit.</text>
</comment>
<comment type="pathway">
    <text evidence="1">Cofactor biosynthesis; (R)-pantothenate biosynthesis; beta-alanine from L-aspartate: step 1/1.</text>
</comment>
<comment type="subunit">
    <text evidence="1">Heterooctamer of four alpha and four beta subunits.</text>
</comment>
<comment type="subcellular location">
    <subcellularLocation>
        <location evidence="1">Cytoplasm</location>
    </subcellularLocation>
</comment>
<comment type="PTM">
    <text evidence="1">Is synthesized initially as an inactive proenzyme, which is activated by self-cleavage at a specific serine bond to produce a beta-subunit with a hydroxyl group at its C-terminus and an alpha-subunit with a pyruvoyl group at its N-terminus.</text>
</comment>
<comment type="similarity">
    <text evidence="1">Belongs to the PanD family.</text>
</comment>
<name>PAND_CHLT3</name>
<dbReference type="EC" id="4.1.1.11" evidence="1"/>
<dbReference type="EMBL" id="CP001100">
    <property type="protein sequence ID" value="ACF14251.1"/>
    <property type="molecule type" value="Genomic_DNA"/>
</dbReference>
<dbReference type="RefSeq" id="WP_012500335.1">
    <property type="nucleotide sequence ID" value="NC_011026.1"/>
</dbReference>
<dbReference type="SMR" id="B3QTQ3"/>
<dbReference type="STRING" id="517418.Ctha_1794"/>
<dbReference type="KEGG" id="cts:Ctha_1794"/>
<dbReference type="eggNOG" id="COG0853">
    <property type="taxonomic scope" value="Bacteria"/>
</dbReference>
<dbReference type="HOGENOM" id="CLU_115305_2_0_10"/>
<dbReference type="OrthoDB" id="9803983at2"/>
<dbReference type="UniPathway" id="UPA00028">
    <property type="reaction ID" value="UER00002"/>
</dbReference>
<dbReference type="Proteomes" id="UP000001208">
    <property type="component" value="Chromosome"/>
</dbReference>
<dbReference type="GO" id="GO:0005829">
    <property type="term" value="C:cytosol"/>
    <property type="evidence" value="ECO:0007669"/>
    <property type="project" value="TreeGrafter"/>
</dbReference>
<dbReference type="GO" id="GO:0004068">
    <property type="term" value="F:aspartate 1-decarboxylase activity"/>
    <property type="evidence" value="ECO:0007669"/>
    <property type="project" value="UniProtKB-UniRule"/>
</dbReference>
<dbReference type="GO" id="GO:0006523">
    <property type="term" value="P:alanine biosynthetic process"/>
    <property type="evidence" value="ECO:0007669"/>
    <property type="project" value="InterPro"/>
</dbReference>
<dbReference type="GO" id="GO:0015940">
    <property type="term" value="P:pantothenate biosynthetic process"/>
    <property type="evidence" value="ECO:0007669"/>
    <property type="project" value="UniProtKB-UniRule"/>
</dbReference>
<dbReference type="CDD" id="cd06919">
    <property type="entry name" value="Asp_decarbox"/>
    <property type="match status" value="1"/>
</dbReference>
<dbReference type="Gene3D" id="2.40.40.20">
    <property type="match status" value="1"/>
</dbReference>
<dbReference type="HAMAP" id="MF_00446">
    <property type="entry name" value="PanD"/>
    <property type="match status" value="1"/>
</dbReference>
<dbReference type="InterPro" id="IPR009010">
    <property type="entry name" value="Asp_de-COase-like_dom_sf"/>
</dbReference>
<dbReference type="InterPro" id="IPR003190">
    <property type="entry name" value="Asp_decarbox"/>
</dbReference>
<dbReference type="NCBIfam" id="TIGR00223">
    <property type="entry name" value="panD"/>
    <property type="match status" value="1"/>
</dbReference>
<dbReference type="PANTHER" id="PTHR21012">
    <property type="entry name" value="ASPARTATE 1-DECARBOXYLASE"/>
    <property type="match status" value="1"/>
</dbReference>
<dbReference type="PANTHER" id="PTHR21012:SF0">
    <property type="entry name" value="ASPARTATE 1-DECARBOXYLASE"/>
    <property type="match status" value="1"/>
</dbReference>
<dbReference type="Pfam" id="PF02261">
    <property type="entry name" value="Asp_decarbox"/>
    <property type="match status" value="1"/>
</dbReference>
<dbReference type="PIRSF" id="PIRSF006246">
    <property type="entry name" value="Asp_decarbox"/>
    <property type="match status" value="1"/>
</dbReference>
<dbReference type="SUPFAM" id="SSF50692">
    <property type="entry name" value="ADC-like"/>
    <property type="match status" value="1"/>
</dbReference>
<accession>B3QTQ3</accession>